<accession>A6NKL6</accession>
<evidence type="ECO:0000255" key="1"/>
<evidence type="ECO:0000256" key="2">
    <source>
        <dbReference type="SAM" id="MobiDB-lite"/>
    </source>
</evidence>
<evidence type="ECO:0000305" key="3"/>
<comment type="subcellular location">
    <subcellularLocation>
        <location evidence="3">Membrane</location>
        <topology evidence="3">Multi-pass membrane protein</topology>
    </subcellularLocation>
</comment>
<comment type="similarity">
    <text evidence="3">Belongs to the TMEM200 family.</text>
</comment>
<keyword id="KW-0472">Membrane</keyword>
<keyword id="KW-1267">Proteomics identification</keyword>
<keyword id="KW-1185">Reference proteome</keyword>
<keyword id="KW-0812">Transmembrane</keyword>
<keyword id="KW-1133">Transmembrane helix</keyword>
<name>T200C_HUMAN</name>
<gene>
    <name type="primary">TMEM200C</name>
    <name type="synonym">TTMA</name>
</gene>
<protein>
    <recommendedName>
        <fullName>Transmembrane protein 200C</fullName>
    </recommendedName>
    <alternativeName>
        <fullName>Transmembrane protein TTMA</fullName>
    </alternativeName>
    <alternativeName>
        <fullName>Two transmembrane domain-containing family member A</fullName>
    </alternativeName>
</protein>
<feature type="chain" id="PRO_0000348944" description="Transmembrane protein 200C">
    <location>
        <begin position="1"/>
        <end position="621"/>
    </location>
</feature>
<feature type="transmembrane region" description="Helical" evidence="1">
    <location>
        <begin position="53"/>
        <end position="73"/>
    </location>
</feature>
<feature type="transmembrane region" description="Helical" evidence="1">
    <location>
        <begin position="167"/>
        <end position="187"/>
    </location>
</feature>
<feature type="region of interest" description="Disordered" evidence="2">
    <location>
        <begin position="12"/>
        <end position="37"/>
    </location>
</feature>
<feature type="region of interest" description="Disordered" evidence="2">
    <location>
        <begin position="80"/>
        <end position="147"/>
    </location>
</feature>
<feature type="region of interest" description="Disordered" evidence="2">
    <location>
        <begin position="284"/>
        <end position="315"/>
    </location>
</feature>
<feature type="region of interest" description="Disordered" evidence="2">
    <location>
        <begin position="347"/>
        <end position="368"/>
    </location>
</feature>
<feature type="region of interest" description="Disordered" evidence="2">
    <location>
        <begin position="384"/>
        <end position="598"/>
    </location>
</feature>
<feature type="compositionally biased region" description="Basic residues" evidence="2">
    <location>
        <begin position="25"/>
        <end position="36"/>
    </location>
</feature>
<feature type="compositionally biased region" description="Low complexity" evidence="2">
    <location>
        <begin position="125"/>
        <end position="147"/>
    </location>
</feature>
<feature type="compositionally biased region" description="Low complexity" evidence="2">
    <location>
        <begin position="290"/>
        <end position="303"/>
    </location>
</feature>
<feature type="compositionally biased region" description="Basic and acidic residues" evidence="2">
    <location>
        <begin position="405"/>
        <end position="418"/>
    </location>
</feature>
<feature type="compositionally biased region" description="Pro residues" evidence="2">
    <location>
        <begin position="479"/>
        <end position="490"/>
    </location>
</feature>
<feature type="compositionally biased region" description="Low complexity" evidence="2">
    <location>
        <begin position="491"/>
        <end position="505"/>
    </location>
</feature>
<feature type="compositionally biased region" description="Low complexity" evidence="2">
    <location>
        <begin position="523"/>
        <end position="533"/>
    </location>
</feature>
<feature type="compositionally biased region" description="Polar residues" evidence="2">
    <location>
        <begin position="586"/>
        <end position="595"/>
    </location>
</feature>
<reference key="1">
    <citation type="journal article" date="2005" name="Nature">
        <title>DNA sequence and analysis of human chromosome 18.</title>
        <authorList>
            <person name="Nusbaum C."/>
            <person name="Zody M.C."/>
            <person name="Borowsky M.L."/>
            <person name="Kamal M."/>
            <person name="Kodira C.D."/>
            <person name="Taylor T.D."/>
            <person name="Whittaker C.A."/>
            <person name="Chang J.L."/>
            <person name="Cuomo C.A."/>
            <person name="Dewar K."/>
            <person name="FitzGerald M.G."/>
            <person name="Yang X."/>
            <person name="Abouelleil A."/>
            <person name="Allen N.R."/>
            <person name="Anderson S."/>
            <person name="Bloom T."/>
            <person name="Bugalter B."/>
            <person name="Butler J."/>
            <person name="Cook A."/>
            <person name="DeCaprio D."/>
            <person name="Engels R."/>
            <person name="Garber M."/>
            <person name="Gnirke A."/>
            <person name="Hafez N."/>
            <person name="Hall J.L."/>
            <person name="Norman C.H."/>
            <person name="Itoh T."/>
            <person name="Jaffe D.B."/>
            <person name="Kuroki Y."/>
            <person name="Lehoczky J."/>
            <person name="Lui A."/>
            <person name="Macdonald P."/>
            <person name="Mauceli E."/>
            <person name="Mikkelsen T.S."/>
            <person name="Naylor J.W."/>
            <person name="Nicol R."/>
            <person name="Nguyen C."/>
            <person name="Noguchi H."/>
            <person name="O'Leary S.B."/>
            <person name="Piqani B."/>
            <person name="Smith C.L."/>
            <person name="Talamas J.A."/>
            <person name="Topham K."/>
            <person name="Totoki Y."/>
            <person name="Toyoda A."/>
            <person name="Wain H.M."/>
            <person name="Young S.K."/>
            <person name="Zeng Q."/>
            <person name="Zimmer A.R."/>
            <person name="Fujiyama A."/>
            <person name="Hattori M."/>
            <person name="Birren B.W."/>
            <person name="Sakaki Y."/>
            <person name="Lander E.S."/>
        </authorList>
    </citation>
    <scope>NUCLEOTIDE SEQUENCE [LARGE SCALE GENOMIC DNA]</scope>
</reference>
<reference key="2">
    <citation type="journal article" date="2005" name="Psychiatr. Genet.">
        <title>Candidate psychiatric illness genes identified in patients with pericentric inversions of chromosome 18.</title>
        <authorList>
            <person name="Pickard B.S."/>
            <person name="Malloy M.P."/>
            <person name="Clark L."/>
            <person name="Lehellard S."/>
            <person name="Ewald H.L."/>
            <person name="Mors O."/>
            <person name="Porteous D.J."/>
            <person name="Blackwood D.H."/>
            <person name="Muir W.J."/>
        </authorList>
    </citation>
    <scope>IDENTIFICATION</scope>
</reference>
<organism>
    <name type="scientific">Homo sapiens</name>
    <name type="common">Human</name>
    <dbReference type="NCBI Taxonomy" id="9606"/>
    <lineage>
        <taxon>Eukaryota</taxon>
        <taxon>Metazoa</taxon>
        <taxon>Chordata</taxon>
        <taxon>Craniata</taxon>
        <taxon>Vertebrata</taxon>
        <taxon>Euteleostomi</taxon>
        <taxon>Mammalia</taxon>
        <taxon>Eutheria</taxon>
        <taxon>Euarchontoglires</taxon>
        <taxon>Primates</taxon>
        <taxon>Haplorrhini</taxon>
        <taxon>Catarrhini</taxon>
        <taxon>Hominidae</taxon>
        <taxon>Homo</taxon>
    </lineage>
</organism>
<dbReference type="EMBL" id="AP005433">
    <property type="status" value="NOT_ANNOTATED_CDS"/>
    <property type="molecule type" value="Genomic_DNA"/>
</dbReference>
<dbReference type="EMBL" id="BK005124">
    <property type="protein sequence ID" value="DAA05326.1"/>
    <property type="molecule type" value="mRNA"/>
</dbReference>
<dbReference type="CCDS" id="CCDS45825.1"/>
<dbReference type="RefSeq" id="NP_001073678.1">
    <property type="nucleotide sequence ID" value="NM_001080209.3"/>
</dbReference>
<dbReference type="RefSeq" id="NP_001382329.1">
    <property type="nucleotide sequence ID" value="NM_001395400.1"/>
</dbReference>
<dbReference type="RefSeq" id="XP_011524031.1">
    <property type="nucleotide sequence ID" value="XM_011525729.2"/>
</dbReference>
<dbReference type="RefSeq" id="XP_054174952.1">
    <property type="nucleotide sequence ID" value="XM_054318977.1"/>
</dbReference>
<dbReference type="SMR" id="A6NKL6"/>
<dbReference type="BioGRID" id="570397">
    <property type="interactions" value="4"/>
</dbReference>
<dbReference type="FunCoup" id="A6NKL6">
    <property type="interactions" value="15"/>
</dbReference>
<dbReference type="IntAct" id="A6NKL6">
    <property type="interactions" value="1"/>
</dbReference>
<dbReference type="MINT" id="A6NKL6"/>
<dbReference type="STRING" id="9606.ENSP00000463375"/>
<dbReference type="GlyGen" id="A6NKL6">
    <property type="glycosylation" value="1 site, 1 O-linked glycan (1 site)"/>
</dbReference>
<dbReference type="iPTMnet" id="A6NKL6"/>
<dbReference type="PhosphoSitePlus" id="A6NKL6"/>
<dbReference type="BioMuta" id="TMEM200C"/>
<dbReference type="jPOST" id="A6NKL6"/>
<dbReference type="MassIVE" id="A6NKL6"/>
<dbReference type="PaxDb" id="9606-ENSP00000463375"/>
<dbReference type="PeptideAtlas" id="A6NKL6"/>
<dbReference type="ProteomicsDB" id="1420"/>
<dbReference type="Antibodypedia" id="66113">
    <property type="antibodies" value="9 antibodies from 5 providers"/>
</dbReference>
<dbReference type="DNASU" id="645369"/>
<dbReference type="Ensembl" id="ENST00000383490.3">
    <property type="protein sequence ID" value="ENSP00000372982.2"/>
    <property type="gene ID" value="ENSG00000206432.4"/>
</dbReference>
<dbReference type="Ensembl" id="ENST00000581347.2">
    <property type="protein sequence ID" value="ENSP00000463375.1"/>
    <property type="gene ID" value="ENSG00000206432.4"/>
</dbReference>
<dbReference type="GeneID" id="645369"/>
<dbReference type="KEGG" id="hsa:645369"/>
<dbReference type="MANE-Select" id="ENST00000383490.3">
    <property type="protein sequence ID" value="ENSP00000372982.2"/>
    <property type="RefSeq nucleotide sequence ID" value="NM_001395400.1"/>
    <property type="RefSeq protein sequence ID" value="NP_001382329.1"/>
</dbReference>
<dbReference type="UCSC" id="uc002kmx.1">
    <property type="organism name" value="human"/>
</dbReference>
<dbReference type="AGR" id="HGNC:37208"/>
<dbReference type="CTD" id="645369"/>
<dbReference type="DisGeNET" id="645369"/>
<dbReference type="GeneCards" id="TMEM200C"/>
<dbReference type="HGNC" id="HGNC:37208">
    <property type="gene designation" value="TMEM200C"/>
</dbReference>
<dbReference type="HPA" id="ENSG00000206432">
    <property type="expression patterns" value="Tissue enhanced (adrenal gland, brain, salivary gland)"/>
</dbReference>
<dbReference type="neXtProt" id="NX_A6NKL6"/>
<dbReference type="OpenTargets" id="ENSG00000206432"/>
<dbReference type="PharmGKB" id="PA165429148"/>
<dbReference type="VEuPathDB" id="HostDB:ENSG00000206432"/>
<dbReference type="eggNOG" id="KOG4823">
    <property type="taxonomic scope" value="Eukaryota"/>
</dbReference>
<dbReference type="GeneTree" id="ENSGT00530000063698"/>
<dbReference type="HOGENOM" id="CLU_030031_0_0_1"/>
<dbReference type="InParanoid" id="A6NKL6"/>
<dbReference type="OMA" id="QVYRESS"/>
<dbReference type="OrthoDB" id="9994280at2759"/>
<dbReference type="PAN-GO" id="A6NKL6">
    <property type="GO annotations" value="0 GO annotations based on evolutionary models"/>
</dbReference>
<dbReference type="PhylomeDB" id="A6NKL6"/>
<dbReference type="TreeFam" id="TF332635"/>
<dbReference type="PathwayCommons" id="A6NKL6"/>
<dbReference type="SignaLink" id="A6NKL6"/>
<dbReference type="BioGRID-ORCS" id="645369">
    <property type="hits" value="6 hits in 1140 CRISPR screens"/>
</dbReference>
<dbReference type="GenomeRNAi" id="645369"/>
<dbReference type="Pharos" id="A6NKL6">
    <property type="development level" value="Tdark"/>
</dbReference>
<dbReference type="PRO" id="PR:A6NKL6"/>
<dbReference type="Proteomes" id="UP000005640">
    <property type="component" value="Chromosome 18"/>
</dbReference>
<dbReference type="RNAct" id="A6NKL6">
    <property type="molecule type" value="protein"/>
</dbReference>
<dbReference type="Bgee" id="ENSG00000206432">
    <property type="expression patterns" value="Expressed in endothelial cell and 118 other cell types or tissues"/>
</dbReference>
<dbReference type="GO" id="GO:0016020">
    <property type="term" value="C:membrane"/>
    <property type="evidence" value="ECO:0007669"/>
    <property type="project" value="UniProtKB-SubCell"/>
</dbReference>
<dbReference type="InterPro" id="IPR018787">
    <property type="entry name" value="DUF2371_TMEM200"/>
</dbReference>
<dbReference type="PANTHER" id="PTHR31815">
    <property type="entry name" value="AGAP005329-PA"/>
    <property type="match status" value="1"/>
</dbReference>
<dbReference type="PANTHER" id="PTHR31815:SF2">
    <property type="entry name" value="TRANSMEMBRANE PROTEIN 200C"/>
    <property type="match status" value="1"/>
</dbReference>
<dbReference type="Pfam" id="PF10177">
    <property type="entry name" value="DUF2371"/>
    <property type="match status" value="1"/>
</dbReference>
<proteinExistence type="evidence at protein level"/>
<sequence length="621" mass="63928">MIATGGLLRISARKQDPLRPPSQIPKRKRKAKKRRKNDVVVVKGKLKLCSISGLIALCGILVLLVGIAMAVVGYWPKATGTNREGGKQLPPAGSSHRVPTTANSSSSGSKNRSRSHPRAPGGVNSSSAGAPRSTPPARAASPSSSSTSVGFFFRIFSGYLHSDKLKVFGPLIMGIGIFLFICANAVLHENRDKKTKIINLRDLYSTVIDVHSLRAKDLAAAAAAAAAAAASSSSSAPAAAPPGAIPLNGFLSYVQSRGLELKPGGCGGSGDAFGAAAMLAKGSWPPHPAAPSGGRPRGAASPPDLASSPRCPREPPSLAEAVYSVYRERSGVAGSRRAAAATAAAAASSCSSPAPCSPPESWGRQSTASSFVDSSLSAFALLPLQGGRDRGGDAEGASCSWQRPPGERGSQEIPRGELDLSMTNLRGAEGSMRGARREPEEPEGAVAARAARGQGGRLPRTGRYAALRRRSTSGLPDYRAPPSPEPPPSPGSADPDSSPLAKAASPSPPLRLEGSPPTRRDSGSSQSDDPSSSNKGYTPLREAGTSTESVLDAVAGQTRDSAVAAPVLGAEQSSPEGASQEPPTAEQPQPVQRQFTNKEKLIMISRSHAIGVEEELESTGI</sequence>